<comment type="catalytic activity">
    <reaction evidence="1">
        <text>2-formamido-N(1)-(5-O-phospho-beta-D-ribosyl)acetamidine + ATP = 5-amino-1-(5-phospho-beta-D-ribosyl)imidazole + ADP + phosphate + H(+)</text>
        <dbReference type="Rhea" id="RHEA:23032"/>
        <dbReference type="ChEBI" id="CHEBI:15378"/>
        <dbReference type="ChEBI" id="CHEBI:30616"/>
        <dbReference type="ChEBI" id="CHEBI:43474"/>
        <dbReference type="ChEBI" id="CHEBI:137981"/>
        <dbReference type="ChEBI" id="CHEBI:147287"/>
        <dbReference type="ChEBI" id="CHEBI:456216"/>
        <dbReference type="EC" id="6.3.3.1"/>
    </reaction>
</comment>
<comment type="pathway">
    <text evidence="1">Purine metabolism; IMP biosynthesis via de novo pathway; 5-amino-1-(5-phospho-D-ribosyl)imidazole from N(2)-formyl-N(1)-(5-phospho-D-ribosyl)glycinamide: step 2/2.</text>
</comment>
<comment type="subcellular location">
    <subcellularLocation>
        <location evidence="1">Cytoplasm</location>
    </subcellularLocation>
</comment>
<comment type="similarity">
    <text evidence="1">Belongs to the AIR synthase family.</text>
</comment>
<comment type="sequence caution" evidence="2">
    <conflict type="erroneous initiation">
        <sequence resource="EMBL-CDS" id="AAM31112"/>
    </conflict>
</comment>
<name>PUR5_METMA</name>
<protein>
    <recommendedName>
        <fullName evidence="1">Phosphoribosylformylglycinamidine cyclo-ligase</fullName>
        <ecNumber evidence="1">6.3.3.1</ecNumber>
    </recommendedName>
    <alternativeName>
        <fullName evidence="1">AIR synthase</fullName>
    </alternativeName>
    <alternativeName>
        <fullName evidence="1">AIRS</fullName>
    </alternativeName>
    <alternativeName>
        <fullName evidence="1">Phosphoribosyl-aminoimidazole synthetase</fullName>
    </alternativeName>
</protein>
<accession>Q8PX06</accession>
<reference key="1">
    <citation type="journal article" date="2002" name="J. Mol. Microbiol. Biotechnol.">
        <title>The genome of Methanosarcina mazei: evidence for lateral gene transfer between Bacteria and Archaea.</title>
        <authorList>
            <person name="Deppenmeier U."/>
            <person name="Johann A."/>
            <person name="Hartsch T."/>
            <person name="Merkl R."/>
            <person name="Schmitz R.A."/>
            <person name="Martinez-Arias R."/>
            <person name="Henne A."/>
            <person name="Wiezer A."/>
            <person name="Baeumer S."/>
            <person name="Jacobi C."/>
            <person name="Brueggemann H."/>
            <person name="Lienard T."/>
            <person name="Christmann A."/>
            <person name="Boemecke M."/>
            <person name="Steckel S."/>
            <person name="Bhattacharyya A."/>
            <person name="Lykidis A."/>
            <person name="Overbeek R."/>
            <person name="Klenk H.-P."/>
            <person name="Gunsalus R.P."/>
            <person name="Fritz H.-J."/>
            <person name="Gottschalk G."/>
        </authorList>
    </citation>
    <scope>NUCLEOTIDE SEQUENCE [LARGE SCALE GENOMIC DNA]</scope>
    <source>
        <strain>ATCC BAA-159 / DSM 3647 / Goe1 / Go1 / JCM 11833 / OCM 88</strain>
    </source>
</reference>
<proteinExistence type="inferred from homology"/>
<gene>
    <name evidence="1" type="primary">purM</name>
    <name type="ordered locus">MM_1416</name>
</gene>
<evidence type="ECO:0000255" key="1">
    <source>
        <dbReference type="HAMAP-Rule" id="MF_00741"/>
    </source>
</evidence>
<evidence type="ECO:0000305" key="2"/>
<sequence length="333" mass="36306">MSEKHLTYADSGVDIKEEEKTVKTLIDKLSYVRKGIGAPLTGIGHYAGLLDFGEYALAMTTDGVGSKVLIANEMQRWNTVGIDCIAMNVNDLLAIGAEPVAFVDYLALEKHEEGFAEQIGEGLLKGAEISRMSIVGGETATLPDIIKGFDLAGTCLGYLKKEDIIEGGRVRVGDVIVGIPSTGVHSNGYTLVRKIIQESGYSYHDPCPYDSSKTIGDDLLEPTRIYIEVLDVLKACEVHGLAHITGSGLLKLRRVTKLGFDFYDPLEPQEIFKFLRKEGGVDDLEMYRTFNMGMGFLIILPEKDAEKAAEITGGKIVGKIVESGIRVKDLVIE</sequence>
<organism>
    <name type="scientific">Methanosarcina mazei (strain ATCC BAA-159 / DSM 3647 / Goe1 / Go1 / JCM 11833 / OCM 88)</name>
    <name type="common">Methanosarcina frisia</name>
    <dbReference type="NCBI Taxonomy" id="192952"/>
    <lineage>
        <taxon>Archaea</taxon>
        <taxon>Methanobacteriati</taxon>
        <taxon>Methanobacteriota</taxon>
        <taxon>Stenosarchaea group</taxon>
        <taxon>Methanomicrobia</taxon>
        <taxon>Methanosarcinales</taxon>
        <taxon>Methanosarcinaceae</taxon>
        <taxon>Methanosarcina</taxon>
    </lineage>
</organism>
<feature type="chain" id="PRO_0000148283" description="Phosphoribosylformylglycinamidine cyclo-ligase">
    <location>
        <begin position="1"/>
        <end position="333"/>
    </location>
</feature>
<keyword id="KW-0067">ATP-binding</keyword>
<keyword id="KW-0963">Cytoplasm</keyword>
<keyword id="KW-0436">Ligase</keyword>
<keyword id="KW-0547">Nucleotide-binding</keyword>
<keyword id="KW-0658">Purine biosynthesis</keyword>
<dbReference type="EC" id="6.3.3.1" evidence="1"/>
<dbReference type="EMBL" id="AE008384">
    <property type="protein sequence ID" value="AAM31112.1"/>
    <property type="status" value="ALT_INIT"/>
    <property type="molecule type" value="Genomic_DNA"/>
</dbReference>
<dbReference type="RefSeq" id="WP_048041220.1">
    <property type="nucleotide sequence ID" value="NC_003901.1"/>
</dbReference>
<dbReference type="SMR" id="Q8PX06"/>
<dbReference type="GeneID" id="82160459"/>
<dbReference type="KEGG" id="mma:MM_1416"/>
<dbReference type="PATRIC" id="fig|192952.21.peg.1639"/>
<dbReference type="eggNOG" id="arCOG00639">
    <property type="taxonomic scope" value="Archaea"/>
</dbReference>
<dbReference type="HOGENOM" id="CLU_047116_0_0_2"/>
<dbReference type="UniPathway" id="UPA00074">
    <property type="reaction ID" value="UER00129"/>
</dbReference>
<dbReference type="Proteomes" id="UP000000595">
    <property type="component" value="Chromosome"/>
</dbReference>
<dbReference type="GO" id="GO:0005829">
    <property type="term" value="C:cytosol"/>
    <property type="evidence" value="ECO:0007669"/>
    <property type="project" value="TreeGrafter"/>
</dbReference>
<dbReference type="GO" id="GO:0005524">
    <property type="term" value="F:ATP binding"/>
    <property type="evidence" value="ECO:0007669"/>
    <property type="project" value="UniProtKB-KW"/>
</dbReference>
<dbReference type="GO" id="GO:0004637">
    <property type="term" value="F:phosphoribosylamine-glycine ligase activity"/>
    <property type="evidence" value="ECO:0007669"/>
    <property type="project" value="TreeGrafter"/>
</dbReference>
<dbReference type="GO" id="GO:0004641">
    <property type="term" value="F:phosphoribosylformylglycinamidine cyclo-ligase activity"/>
    <property type="evidence" value="ECO:0007669"/>
    <property type="project" value="UniProtKB-UniRule"/>
</dbReference>
<dbReference type="GO" id="GO:0006189">
    <property type="term" value="P:'de novo' IMP biosynthetic process"/>
    <property type="evidence" value="ECO:0007669"/>
    <property type="project" value="UniProtKB-UniRule"/>
</dbReference>
<dbReference type="GO" id="GO:0046084">
    <property type="term" value="P:adenine biosynthetic process"/>
    <property type="evidence" value="ECO:0007669"/>
    <property type="project" value="TreeGrafter"/>
</dbReference>
<dbReference type="CDD" id="cd02196">
    <property type="entry name" value="PurM"/>
    <property type="match status" value="1"/>
</dbReference>
<dbReference type="FunFam" id="3.30.1330.10:FF:000020">
    <property type="entry name" value="Phosphoribosylformylglycinamidine cyclo-ligase"/>
    <property type="match status" value="1"/>
</dbReference>
<dbReference type="FunFam" id="3.90.650.10:FF:000011">
    <property type="entry name" value="Phosphoribosylformylglycinamidine cyclo-ligase"/>
    <property type="match status" value="1"/>
</dbReference>
<dbReference type="Gene3D" id="3.90.650.10">
    <property type="entry name" value="PurM-like C-terminal domain"/>
    <property type="match status" value="1"/>
</dbReference>
<dbReference type="Gene3D" id="3.30.1330.10">
    <property type="entry name" value="PurM-like, N-terminal domain"/>
    <property type="match status" value="1"/>
</dbReference>
<dbReference type="HAMAP" id="MF_00741">
    <property type="entry name" value="AIRS"/>
    <property type="match status" value="1"/>
</dbReference>
<dbReference type="InterPro" id="IPR010918">
    <property type="entry name" value="PurM-like_C_dom"/>
</dbReference>
<dbReference type="InterPro" id="IPR036676">
    <property type="entry name" value="PurM-like_C_sf"/>
</dbReference>
<dbReference type="InterPro" id="IPR016188">
    <property type="entry name" value="PurM-like_N"/>
</dbReference>
<dbReference type="InterPro" id="IPR036921">
    <property type="entry name" value="PurM-like_N_sf"/>
</dbReference>
<dbReference type="InterPro" id="IPR004733">
    <property type="entry name" value="PurM_cligase"/>
</dbReference>
<dbReference type="NCBIfam" id="TIGR00878">
    <property type="entry name" value="purM"/>
    <property type="match status" value="1"/>
</dbReference>
<dbReference type="PANTHER" id="PTHR10520:SF12">
    <property type="entry name" value="TRIFUNCTIONAL PURINE BIOSYNTHETIC PROTEIN ADENOSINE-3"/>
    <property type="match status" value="1"/>
</dbReference>
<dbReference type="PANTHER" id="PTHR10520">
    <property type="entry name" value="TRIFUNCTIONAL PURINE BIOSYNTHETIC PROTEIN ADENOSINE-3-RELATED"/>
    <property type="match status" value="1"/>
</dbReference>
<dbReference type="Pfam" id="PF00586">
    <property type="entry name" value="AIRS"/>
    <property type="match status" value="1"/>
</dbReference>
<dbReference type="Pfam" id="PF02769">
    <property type="entry name" value="AIRS_C"/>
    <property type="match status" value="1"/>
</dbReference>
<dbReference type="SUPFAM" id="SSF56042">
    <property type="entry name" value="PurM C-terminal domain-like"/>
    <property type="match status" value="1"/>
</dbReference>
<dbReference type="SUPFAM" id="SSF55326">
    <property type="entry name" value="PurM N-terminal domain-like"/>
    <property type="match status" value="1"/>
</dbReference>